<gene>
    <name evidence="12" type="primary">kgp</name>
</gene>
<keyword id="KW-0106">Calcium</keyword>
<keyword id="KW-0903">Direct protein sequencing</keyword>
<keyword id="KW-0378">Hydrolase</keyword>
<keyword id="KW-0479">Metal-binding</keyword>
<keyword id="KW-0645">Protease</keyword>
<keyword id="KW-0964">Secreted</keyword>
<keyword id="KW-0732">Signal</keyword>
<keyword id="KW-0788">Thiol protease</keyword>
<keyword id="KW-0843">Virulence</keyword>
<keyword id="KW-0865">Zymogen</keyword>
<name>KGP38_PORGN</name>
<proteinExistence type="evidence at protein level"/>
<sequence length="1723" mass="187262">MRKLLLLIAASLLGVGLYAQSAKIKLDAPTTRTTCTNNSFKQFDASFSFNEVELTKVETKGGTFASVSIPGAFPTGEVGSPEVPAVRKLIAVPVGATPVVRVKSFTEQVYSLNQYGSEKLMPHQPSMSKSDDPEKVPFVYNAAAYARKGFVGQELTQVEMLGTMRGVRIAALTINPVQYDVVANQLKVRNNIEIEVSFQGADEVATQRLYDASFSPYFETAYKQLFNRDVYTDHGDLYNTPVRMLVVAGAKFKEALKPWLTWKAQKGFYLDVHYTDEAEVGTTNASIKAFIHKKYNDGLAASAAPVFLALVGDTDVISGEKGKKTKKVTDLYYSAVDGDYFPEMYTFRMSASSPEELTNIIDKVLMYEKATMPDKSYLEKALLIAGADSYWNPKIGQQTIKYAVQYYYNQDHGYTDVYSYPKAPYTGCYSHLNTGVGFANYTAHGSETSWADPSLTATQVKALTNKDKYFLAIGNCCVTAQFDYPQPCFGEVMTRVKEKGAYAYIGSSPNSYWGEDYYWSVGANAVFGVQPTFEGTSMGSYDATFLEDSYNTVNSIMWAGNLAATHAGNIGNITHIGAHYYWEAYHVLGDGSVMPYRAMPKTNTYTLPASLPQNQASYSIQASAGSYVAISKDGVLYGTGVANASGVATVNMTKQITENGNYDVVITRSNYLPVIKQIQAGEPSPYQPVSNLTATTQGQKVTLKWDAPSAKKAEASREVKRIGDGLFVTIEPANDVRANEAKVVLAADNVWGDNTGYQFLLDADHNTFGSVIPATGPLFTGTASSNLYSANFEYLIPANADPVVTTQNIIVTGQGEVVIPGGVYDYCITNPEPASGKMWIAGDGGNQPARYDDFTFEAGKKYTFTMRRAGMGDGTDMEVEDDSPASYTYTVYRDGTKIQEGLTATTFEEDGVAAGNHEYCVEVKYTAGVSPKVCKDVTVEGSNEFAPVQNLTGSAVGQKVTLKWDAPNGTPNPNPNPNPGTTTLSESFENGIPASWKTIDADGDGHGWKPGNAPGIAGYNSNGCVYSESFGLGGIGVLTPDNYLITPALDLPNGGKLTFWVCAQDANYASEHYAVYASSTGNDASNFTNALLEETITAKGVRSPEAIRGRIQGTWRQKTVDLPAGTKYVAFRHFQSTDMFYIDLDEVEIKANGKRADFTETFESSTHGEAPAEWTTIDADGDGQDWLCLSSGQLDWLTAHGGTNVVASFSWNGMALNPDNYLISKDVTGATKVKYYYAVNDGFPGDHYAVMISKTGTNAGDFTVVFEETPNGINKGGARFGLSTEANGAKPQSVWIERTVDLPAGTKYVAFRHYNCSDLNYILLDDIQFTMGGSPTPTDYTYTVYRDGTKIKEGLTETTFEEDGVATGNHEYCVEVKYTAGVSPKVCVNVTINPTQFNPVKNLKAQPDGGDVVLKWEAPSGKRGELLNEDFEGDAIPTGWTALDADGDGNNWDITLNEFTRGERHVLSPLRASNVAISYSSLLQGQEYLPLTPNNFLITPKVEGAKKITYKVGSPGLPQWSHDHYALCISKSGTAAADFEVIFEETMTYTQGGANLTREKDLPAGTKYVAFRHYNCTDVLGIMIDDVVITGEGEGPSYTYTVYRDGTKIQEGLTETTYRDAGMSAQSHEYCVEVKYAAGVSPKVCVDYIPDGVADVTAQKPYTLTVVGKTITVTCQGEAMIYDMNGRRLAAGRNTVVYTAQGGYYAVMVVVDGKSYVEKLAIK</sequence>
<protein>
    <recommendedName>
        <fullName evidence="8 9 12">Lys-gingipain 381</fullName>
        <ecNumber>3.4.22.47</ecNumber>
    </recommendedName>
    <component>
        <recommendedName>
            <fullName evidence="1 3">Lys-gingipain catalytic subunit</fullName>
        </recommendedName>
    </component>
    <component>
        <recommendedName>
            <fullName evidence="3">39 kDa adhesin</fullName>
        </recommendedName>
    </component>
    <component>
        <recommendedName>
            <fullName evidence="3">15 kDa adhesin</fullName>
        </recommendedName>
    </component>
    <component>
        <recommendedName>
            <fullName evidence="3">44 kDa adhesin</fullName>
        </recommendedName>
    </component>
</protein>
<dbReference type="EC" id="3.4.22.47"/>
<dbReference type="EMBL" id="D83258">
    <property type="protein sequence ID" value="BAA11870.1"/>
    <property type="molecule type" value="Genomic_DNA"/>
</dbReference>
<dbReference type="SMR" id="P72194"/>
<dbReference type="MEROPS" id="C25.002"/>
<dbReference type="GO" id="GO:0005576">
    <property type="term" value="C:extracellular region"/>
    <property type="evidence" value="ECO:0000250"/>
    <property type="project" value="UniProtKB"/>
</dbReference>
<dbReference type="GO" id="GO:0005509">
    <property type="term" value="F:calcium ion binding"/>
    <property type="evidence" value="ECO:0000250"/>
    <property type="project" value="UniProtKB"/>
</dbReference>
<dbReference type="GO" id="GO:0004197">
    <property type="term" value="F:cysteine-type endopeptidase activity"/>
    <property type="evidence" value="ECO:0000250"/>
    <property type="project" value="UniProtKB"/>
</dbReference>
<dbReference type="GO" id="GO:0044179">
    <property type="term" value="P:hemolysis in another organism"/>
    <property type="evidence" value="ECO:0000250"/>
    <property type="project" value="UniProtKB"/>
</dbReference>
<dbReference type="GO" id="GO:0006508">
    <property type="term" value="P:proteolysis"/>
    <property type="evidence" value="ECO:0000250"/>
    <property type="project" value="UniProtKB"/>
</dbReference>
<dbReference type="FunFam" id="2.60.40.3800:FF:000002">
    <property type="entry name" value="Lys-gingipain W83"/>
    <property type="match status" value="1"/>
</dbReference>
<dbReference type="FunFam" id="3.40.50.1460:FF:000023">
    <property type="entry name" value="Lys-gingipain W83"/>
    <property type="match status" value="1"/>
</dbReference>
<dbReference type="Gene3D" id="2.60.120.200">
    <property type="match status" value="3"/>
</dbReference>
<dbReference type="Gene3D" id="2.60.40.3800">
    <property type="match status" value="1"/>
</dbReference>
<dbReference type="Gene3D" id="3.40.50.1460">
    <property type="match status" value="1"/>
</dbReference>
<dbReference type="Gene3D" id="3.40.50.10390">
    <property type="entry name" value="Gingipain r, domain 1"/>
    <property type="match status" value="1"/>
</dbReference>
<dbReference type="Gene3D" id="2.60.40.10">
    <property type="entry name" value="Immunoglobulins"/>
    <property type="match status" value="4"/>
</dbReference>
<dbReference type="InterPro" id="IPR029030">
    <property type="entry name" value="Caspase-like_dom_sf"/>
</dbReference>
<dbReference type="InterPro" id="IPR011628">
    <property type="entry name" value="Cleaved_adhesin"/>
</dbReference>
<dbReference type="InterPro" id="IPR001769">
    <property type="entry name" value="Gingipain"/>
</dbReference>
<dbReference type="InterPro" id="IPR029031">
    <property type="entry name" value="Gingipain_N_sf"/>
</dbReference>
<dbReference type="InterPro" id="IPR038490">
    <property type="entry name" value="Gingipain_propep_sf"/>
</dbReference>
<dbReference type="InterPro" id="IPR013783">
    <property type="entry name" value="Ig-like_fold"/>
</dbReference>
<dbReference type="InterPro" id="IPR018832">
    <property type="entry name" value="Pept_C25_gingipain_C"/>
</dbReference>
<dbReference type="InterPro" id="IPR005536">
    <property type="entry name" value="Peptidase_C25_Ig-like_domain"/>
</dbReference>
<dbReference type="InterPro" id="IPR012600">
    <property type="entry name" value="Propeptide_C25"/>
</dbReference>
<dbReference type="NCBIfam" id="NF038128">
    <property type="entry name" value="choice_anch_J"/>
    <property type="match status" value="3"/>
</dbReference>
<dbReference type="Pfam" id="PF07675">
    <property type="entry name" value="Cleaved_Adhesin"/>
    <property type="match status" value="3"/>
</dbReference>
<dbReference type="Pfam" id="PF10365">
    <property type="entry name" value="DUF2436"/>
    <property type="match status" value="1"/>
</dbReference>
<dbReference type="Pfam" id="PF01364">
    <property type="entry name" value="Peptidase_C25"/>
    <property type="match status" value="1"/>
</dbReference>
<dbReference type="Pfam" id="PF03785">
    <property type="entry name" value="Peptidase_C25_C"/>
    <property type="match status" value="1"/>
</dbReference>
<dbReference type="Pfam" id="PF08126">
    <property type="entry name" value="Propeptide_C25"/>
    <property type="match status" value="1"/>
</dbReference>
<dbReference type="SUPFAM" id="SSF52129">
    <property type="entry name" value="Caspase-like"/>
    <property type="match status" value="1"/>
</dbReference>
<comment type="function">
    <text evidence="1">Cysteine proteinase with a strong preference for substrates with Lys in the P1 position. Hydrolyzes bovine hemoglobin, bovine serum albumin, casein, human placental type I collagen and human IgA and IgG. Disrupts the functions of polymorphonuclear leukocytes. May act as a virulence factor in the development of peridontal disease. Involved in the coaggregation of P.gingivalis with other oral bacteria (By similarity).</text>
</comment>
<comment type="catalytic activity">
    <reaction evidence="1">
        <text>Endopeptidase with strict specificity for lysyl bonds.</text>
        <dbReference type="EC" id="3.4.22.47"/>
    </reaction>
</comment>
<comment type="subcellular location">
    <molecule>Lys-gingipain catalytic subunit</molecule>
    <subcellularLocation>
        <location evidence="7">Secreted</location>
    </subcellularLocation>
</comment>
<comment type="PTM">
    <text evidence="3 7">Proteolytically cleaved into a catalytic subunit and three adhesins. Arg-gingipain is involved in this post-translational processing.</text>
</comment>
<comment type="polymorphism">
    <text evidence="6">Several forms of kgp with differences at the C-terminus exist in different P.gingivalis strains.</text>
</comment>
<comment type="similarity">
    <text evidence="4">Belongs to the peptidase C25 family.</text>
</comment>
<organism>
    <name type="scientific">Porphyromonas gingivalis</name>
    <name type="common">Bacteroides gingivalis</name>
    <dbReference type="NCBI Taxonomy" id="837"/>
    <lineage>
        <taxon>Bacteria</taxon>
        <taxon>Pseudomonadati</taxon>
        <taxon>Bacteroidota</taxon>
        <taxon>Bacteroidia</taxon>
        <taxon>Bacteroidales</taxon>
        <taxon>Porphyromonadaceae</taxon>
        <taxon>Porphyromonas</taxon>
    </lineage>
</organism>
<accession>P72194</accession>
<reference evidence="10 12" key="1">
    <citation type="journal article" date="1996" name="J. Biochem.">
        <title>Cloning and sequencing of the gene encoding a novel lysine-specific cysteine proteinase (Lys-gingipain) in Porphyromonas gingivalis: structural relationship with the arginine-specific cysteine proteinase (Arg-gingipain).</title>
        <authorList>
            <person name="Okamoto K."/>
            <person name="Kadowaki T."/>
            <person name="Nakayama K."/>
            <person name="Yamamoto K."/>
        </authorList>
    </citation>
    <scope>NUCLEOTIDE SEQUENCE [GENOMIC DNA]</scope>
    <scope>PROTEIN SEQUENCE OF 229-253</scope>
    <scope>SUBCELLULAR LOCATION</scope>
    <scope>POST-TRANSLATIONAL PROCESSING</scope>
    <source>
        <strain evidence="12">ATCC BAA-1703 / FDC 381</strain>
    </source>
</reference>
<reference evidence="10" key="2">
    <citation type="journal article" date="2004" name="J. Clin. Microbiol.">
        <title>Distribution of Porphyromonas gingivalis biotypes defined by alleles of the kgp (Lys-gingipain) gene.</title>
        <authorList>
            <person name="Nadkarni M.A."/>
            <person name="Nguyen K.A."/>
            <person name="Chapple C.C."/>
            <person name="DeCarlo A.A."/>
            <person name="Jacques N.A."/>
            <person name="Hunter N."/>
        </authorList>
    </citation>
    <scope>POLYMORPHISM</scope>
</reference>
<feature type="signal peptide" evidence="4">
    <location>
        <begin position="1"/>
        <end position="24"/>
    </location>
</feature>
<feature type="propeptide" id="PRO_0000395369" evidence="4 7">
    <location>
        <begin position="25"/>
        <end position="228"/>
    </location>
</feature>
<feature type="chain" id="PRO_0000395370" description="Lys-gingipain 381" evidence="11">
    <location>
        <begin position="229"/>
        <end position="1723"/>
    </location>
</feature>
<feature type="chain" id="PRO_0000395371" description="Lys-gingipain catalytic subunit" evidence="11">
    <location>
        <begin position="229"/>
        <end status="unknown"/>
    </location>
</feature>
<feature type="chain" id="PRO_0000395372" description="39 kDa adhesin" evidence="3">
    <location>
        <begin position="738"/>
        <end status="unknown"/>
    </location>
</feature>
<feature type="chain" id="PRO_0000395373" description="15 kDa adhesin" evidence="3">
    <location>
        <begin position="1156"/>
        <end status="unknown"/>
    </location>
</feature>
<feature type="chain" id="PRO_0000395374" description="44 kDa adhesin" evidence="3">
    <location>
        <begin position="1291"/>
        <end status="unknown"/>
    </location>
</feature>
<feature type="region of interest" description="Disordered" evidence="5">
    <location>
        <begin position="964"/>
        <end position="985"/>
    </location>
</feature>
<feature type="active site" description="Proton donor" evidence="2">
    <location>
        <position position="444"/>
    </location>
</feature>
<feature type="active site" description="Nucleophile" evidence="2">
    <location>
        <position position="477"/>
    </location>
</feature>
<feature type="binding site" evidence="3">
    <location>
        <position position="313"/>
    </location>
    <ligand>
        <name>Ca(2+)</name>
        <dbReference type="ChEBI" id="CHEBI:29108"/>
        <label>1</label>
    </ligand>
</feature>
<feature type="binding site" evidence="3">
    <location>
        <position position="337"/>
    </location>
    <ligand>
        <name>Ca(2+)</name>
        <dbReference type="ChEBI" id="CHEBI:29108"/>
        <label>2</label>
    </ligand>
</feature>
<feature type="binding site" evidence="3">
    <location>
        <position position="339"/>
    </location>
    <ligand>
        <name>Ca(2+)</name>
        <dbReference type="ChEBI" id="CHEBI:29108"/>
        <label>2</label>
    </ligand>
</feature>
<feature type="binding site" evidence="3">
    <location>
        <position position="341"/>
    </location>
    <ligand>
        <name>Ca(2+)</name>
        <dbReference type="ChEBI" id="CHEBI:29108"/>
        <label>2</label>
    </ligand>
</feature>
<feature type="binding site" evidence="3">
    <location>
        <position position="343"/>
    </location>
    <ligand>
        <name>Ca(2+)</name>
        <dbReference type="ChEBI" id="CHEBI:29108"/>
        <label>2</label>
    </ligand>
</feature>
<feature type="binding site" evidence="3">
    <location>
        <position position="482"/>
    </location>
    <ligand>
        <name>Ca(2+)</name>
        <dbReference type="ChEBI" id="CHEBI:29108"/>
        <label>1</label>
    </ligand>
</feature>
<feature type="binding site" evidence="3">
    <location>
        <position position="491"/>
    </location>
    <ligand>
        <name>Ca(2+)</name>
        <dbReference type="ChEBI" id="CHEBI:29108"/>
        <label>1</label>
    </ligand>
</feature>
<feature type="binding site" evidence="3">
    <location>
        <position position="987"/>
    </location>
    <ligand>
        <name>Ca(2+)</name>
        <dbReference type="ChEBI" id="CHEBI:29108"/>
        <label>3</label>
    </ligand>
</feature>
<feature type="binding site" evidence="3">
    <location>
        <position position="989"/>
    </location>
    <ligand>
        <name>Ca(2+)</name>
        <dbReference type="ChEBI" id="CHEBI:29108"/>
        <label>3</label>
    </ligand>
</feature>
<feature type="binding site" evidence="3">
    <location>
        <position position="1000"/>
    </location>
    <ligand>
        <name>Ca(2+)</name>
        <dbReference type="ChEBI" id="CHEBI:29108"/>
        <label>4</label>
    </ligand>
</feature>
<feature type="binding site" evidence="3">
    <location>
        <position position="1002"/>
    </location>
    <ligand>
        <name>Ca(2+)</name>
        <dbReference type="ChEBI" id="CHEBI:29108"/>
        <label>4</label>
    </ligand>
</feature>
<feature type="binding site" evidence="3">
    <location>
        <position position="1004"/>
    </location>
    <ligand>
        <name>Ca(2+)</name>
        <dbReference type="ChEBI" id="CHEBI:29108"/>
        <label>4</label>
    </ligand>
</feature>
<feature type="binding site" evidence="3">
    <location>
        <position position="1006"/>
    </location>
    <ligand>
        <name>Ca(2+)</name>
        <dbReference type="ChEBI" id="CHEBI:29108"/>
        <label>4</label>
    </ligand>
</feature>
<feature type="binding site" evidence="3">
    <location>
        <position position="1021"/>
    </location>
    <ligand>
        <name>Ca(2+)</name>
        <dbReference type="ChEBI" id="CHEBI:29108"/>
        <label>3</label>
    </ligand>
</feature>
<feature type="binding site" evidence="3">
    <location>
        <position position="1023"/>
    </location>
    <ligand>
        <name>Ca(2+)</name>
        <dbReference type="ChEBI" id="CHEBI:29108"/>
        <label>3</label>
    </ligand>
</feature>
<feature type="binding site" evidence="3">
    <location>
        <position position="1042"/>
    </location>
    <ligand>
        <name>Ca(2+)</name>
        <dbReference type="ChEBI" id="CHEBI:29108"/>
        <label>4</label>
    </ligand>
</feature>
<feature type="binding site" evidence="3">
    <location>
        <position position="1145"/>
    </location>
    <ligand>
        <name>Ca(2+)</name>
        <dbReference type="ChEBI" id="CHEBI:29108"/>
        <label>3</label>
    </ligand>
</feature>
<feature type="binding site" evidence="3">
    <location>
        <position position="1146"/>
    </location>
    <ligand>
        <name>Ca(2+)</name>
        <dbReference type="ChEBI" id="CHEBI:29108"/>
        <label>3</label>
    </ligand>
</feature>
<feature type="binding site" evidence="3">
    <location>
        <position position="1430"/>
    </location>
    <ligand>
        <name>Ca(2+)</name>
        <dbReference type="ChEBI" id="CHEBI:29108"/>
        <label>5</label>
    </ligand>
</feature>
<feature type="binding site" evidence="3">
    <location>
        <position position="1432"/>
    </location>
    <ligand>
        <name>Ca(2+)</name>
        <dbReference type="ChEBI" id="CHEBI:29108"/>
        <label>5</label>
    </ligand>
</feature>
<feature type="binding site" evidence="3">
    <location>
        <position position="1444"/>
    </location>
    <ligand>
        <name>Ca(2+)</name>
        <dbReference type="ChEBI" id="CHEBI:29108"/>
        <label>6</label>
    </ligand>
</feature>
<feature type="binding site" evidence="3">
    <location>
        <position position="1446"/>
    </location>
    <ligand>
        <name>Ca(2+)</name>
        <dbReference type="ChEBI" id="CHEBI:29108"/>
        <label>6</label>
    </ligand>
</feature>
<feature type="binding site" evidence="3">
    <location>
        <position position="1448"/>
    </location>
    <ligand>
        <name>Ca(2+)</name>
        <dbReference type="ChEBI" id="CHEBI:29108"/>
        <label>6</label>
    </ligand>
</feature>
<feature type="binding site" evidence="3">
    <location>
        <position position="1450"/>
    </location>
    <ligand>
        <name>Ca(2+)</name>
        <dbReference type="ChEBI" id="CHEBI:29108"/>
        <label>6</label>
    </ligand>
</feature>
<feature type="binding site" evidence="3">
    <location>
        <position position="1480"/>
    </location>
    <ligand>
        <name>Ca(2+)</name>
        <dbReference type="ChEBI" id="CHEBI:29108"/>
        <label>5</label>
    </ligand>
</feature>
<feature type="binding site" evidence="3">
    <location>
        <position position="1495"/>
    </location>
    <ligand>
        <name>Ca(2+)</name>
        <dbReference type="ChEBI" id="CHEBI:29108"/>
        <label>6</label>
    </ligand>
</feature>
<feature type="binding site" evidence="3">
    <location>
        <position position="1585"/>
    </location>
    <ligand>
        <name>Ca(2+)</name>
        <dbReference type="ChEBI" id="CHEBI:29108"/>
        <label>5</label>
    </ligand>
</feature>
<feature type="site" description="Cleavage; site 1" evidence="3 7">
    <location>
        <begin position="228"/>
        <end position="229"/>
    </location>
</feature>
<feature type="site" description="Cleavage; site 2" evidence="3">
    <location>
        <begin position="737"/>
        <end position="738"/>
    </location>
</feature>
<feature type="site" description="Cleavage; site 3" evidence="3">
    <location>
        <begin position="1155"/>
        <end position="1156"/>
    </location>
</feature>
<feature type="site" description="Cleavage; site 4" evidence="3">
    <location>
        <begin position="1290"/>
        <end position="1291"/>
    </location>
</feature>
<evidence type="ECO:0000250" key="1">
    <source>
        <dbReference type="UniProtKB" id="B2RLK2"/>
    </source>
</evidence>
<evidence type="ECO:0000250" key="2">
    <source>
        <dbReference type="UniProtKB" id="P95493"/>
    </source>
</evidence>
<evidence type="ECO:0000250" key="3">
    <source>
        <dbReference type="UniProtKB" id="Q51817"/>
    </source>
</evidence>
<evidence type="ECO:0000255" key="4"/>
<evidence type="ECO:0000256" key="5">
    <source>
        <dbReference type="SAM" id="MobiDB-lite"/>
    </source>
</evidence>
<evidence type="ECO:0000269" key="6">
    <source>
    </source>
</evidence>
<evidence type="ECO:0000269" key="7">
    <source>
    </source>
</evidence>
<evidence type="ECO:0000303" key="8">
    <source>
    </source>
</evidence>
<evidence type="ECO:0000303" key="9">
    <source>
    </source>
</evidence>
<evidence type="ECO:0000305" key="10"/>
<evidence type="ECO:0000305" key="11">
    <source>
    </source>
</evidence>
<evidence type="ECO:0000312" key="12">
    <source>
        <dbReference type="EMBL" id="BAA11870.1"/>
    </source>
</evidence>